<evidence type="ECO:0000255" key="1">
    <source>
        <dbReference type="HAMAP-Rule" id="MF_01400"/>
    </source>
</evidence>
<evidence type="ECO:0000255" key="2">
    <source>
        <dbReference type="PROSITE-ProRule" id="PRU01126"/>
    </source>
</evidence>
<organism>
    <name type="scientific">Listeria innocua serovar 6a (strain ATCC BAA-680 / CLIP 11262)</name>
    <dbReference type="NCBI Taxonomy" id="272626"/>
    <lineage>
        <taxon>Bacteria</taxon>
        <taxon>Bacillati</taxon>
        <taxon>Bacillota</taxon>
        <taxon>Bacilli</taxon>
        <taxon>Bacillales</taxon>
        <taxon>Listeriaceae</taxon>
        <taxon>Listeria</taxon>
    </lineage>
</organism>
<gene>
    <name evidence="1" type="primary">msrB</name>
    <name type="ordered locus">lin1973</name>
</gene>
<protein>
    <recommendedName>
        <fullName evidence="1">Peptide methionine sulfoxide reductase MsrB</fullName>
        <ecNumber evidence="1">1.8.4.12</ecNumber>
    </recommendedName>
    <alternativeName>
        <fullName evidence="1">Peptide-methionine (R)-S-oxide reductase</fullName>
    </alternativeName>
</protein>
<name>MSRB_LISIN</name>
<feature type="chain" id="PRO_0000140280" description="Peptide methionine sulfoxide reductase MsrB">
    <location>
        <begin position="1"/>
        <end position="145"/>
    </location>
</feature>
<feature type="domain" description="MsrB" evidence="2">
    <location>
        <begin position="6"/>
        <end position="129"/>
    </location>
</feature>
<feature type="active site" description="Nucleophile" evidence="2">
    <location>
        <position position="118"/>
    </location>
</feature>
<comment type="catalytic activity">
    <reaction evidence="1">
        <text>L-methionyl-[protein] + [thioredoxin]-disulfide + H2O = L-methionyl-(R)-S-oxide-[protein] + [thioredoxin]-dithiol</text>
        <dbReference type="Rhea" id="RHEA:24164"/>
        <dbReference type="Rhea" id="RHEA-COMP:10698"/>
        <dbReference type="Rhea" id="RHEA-COMP:10700"/>
        <dbReference type="Rhea" id="RHEA-COMP:12313"/>
        <dbReference type="Rhea" id="RHEA-COMP:12314"/>
        <dbReference type="ChEBI" id="CHEBI:15377"/>
        <dbReference type="ChEBI" id="CHEBI:16044"/>
        <dbReference type="ChEBI" id="CHEBI:29950"/>
        <dbReference type="ChEBI" id="CHEBI:45764"/>
        <dbReference type="ChEBI" id="CHEBI:50058"/>
        <dbReference type="EC" id="1.8.4.12"/>
    </reaction>
</comment>
<comment type="similarity">
    <text evidence="1">Belongs to the MsrB Met sulfoxide reductase family.</text>
</comment>
<dbReference type="EC" id="1.8.4.12" evidence="1"/>
<dbReference type="EMBL" id="AL596170">
    <property type="protein sequence ID" value="CAC97203.1"/>
    <property type="molecule type" value="Genomic_DNA"/>
</dbReference>
<dbReference type="PIR" id="AC1679">
    <property type="entry name" value="AC1679"/>
</dbReference>
<dbReference type="RefSeq" id="WP_010991686.1">
    <property type="nucleotide sequence ID" value="NC_003212.1"/>
</dbReference>
<dbReference type="SMR" id="Q92AE9"/>
<dbReference type="STRING" id="272626.gene:17566331"/>
<dbReference type="GeneID" id="93235311"/>
<dbReference type="KEGG" id="lin:lin1973"/>
<dbReference type="eggNOG" id="COG0229">
    <property type="taxonomic scope" value="Bacteria"/>
</dbReference>
<dbReference type="HOGENOM" id="CLU_031040_8_5_9"/>
<dbReference type="OrthoDB" id="4174719at2"/>
<dbReference type="Proteomes" id="UP000002513">
    <property type="component" value="Chromosome"/>
</dbReference>
<dbReference type="GO" id="GO:0005737">
    <property type="term" value="C:cytoplasm"/>
    <property type="evidence" value="ECO:0007669"/>
    <property type="project" value="TreeGrafter"/>
</dbReference>
<dbReference type="GO" id="GO:0033743">
    <property type="term" value="F:peptide-methionine (R)-S-oxide reductase activity"/>
    <property type="evidence" value="ECO:0007669"/>
    <property type="project" value="UniProtKB-UniRule"/>
</dbReference>
<dbReference type="GO" id="GO:0030091">
    <property type="term" value="P:protein repair"/>
    <property type="evidence" value="ECO:0007669"/>
    <property type="project" value="InterPro"/>
</dbReference>
<dbReference type="GO" id="GO:0006979">
    <property type="term" value="P:response to oxidative stress"/>
    <property type="evidence" value="ECO:0007669"/>
    <property type="project" value="InterPro"/>
</dbReference>
<dbReference type="FunFam" id="2.170.150.20:FF:000003">
    <property type="entry name" value="Peptide methionine sulfoxide reductase MsrB"/>
    <property type="match status" value="1"/>
</dbReference>
<dbReference type="Gene3D" id="2.170.150.20">
    <property type="entry name" value="Peptide methionine sulfoxide reductase"/>
    <property type="match status" value="1"/>
</dbReference>
<dbReference type="HAMAP" id="MF_01400">
    <property type="entry name" value="MsrB"/>
    <property type="match status" value="1"/>
</dbReference>
<dbReference type="InterPro" id="IPR028427">
    <property type="entry name" value="Met_Sox_Rdtase_MsrB"/>
</dbReference>
<dbReference type="InterPro" id="IPR002579">
    <property type="entry name" value="Met_Sox_Rdtase_MsrB_dom"/>
</dbReference>
<dbReference type="InterPro" id="IPR011057">
    <property type="entry name" value="Mss4-like_sf"/>
</dbReference>
<dbReference type="NCBIfam" id="TIGR00357">
    <property type="entry name" value="peptide-methionine (R)-S-oxide reductase MsrB"/>
    <property type="match status" value="1"/>
</dbReference>
<dbReference type="PANTHER" id="PTHR10173">
    <property type="entry name" value="METHIONINE SULFOXIDE REDUCTASE"/>
    <property type="match status" value="1"/>
</dbReference>
<dbReference type="PANTHER" id="PTHR10173:SF59">
    <property type="entry name" value="PEPTIDE METHIONINE SULFOXIDE REDUCTASE MSRA_MSRB"/>
    <property type="match status" value="1"/>
</dbReference>
<dbReference type="Pfam" id="PF01641">
    <property type="entry name" value="SelR"/>
    <property type="match status" value="1"/>
</dbReference>
<dbReference type="SUPFAM" id="SSF51316">
    <property type="entry name" value="Mss4-like"/>
    <property type="match status" value="1"/>
</dbReference>
<dbReference type="PROSITE" id="PS51790">
    <property type="entry name" value="MSRB"/>
    <property type="match status" value="1"/>
</dbReference>
<keyword id="KW-0560">Oxidoreductase</keyword>
<reference key="1">
    <citation type="journal article" date="2001" name="Science">
        <title>Comparative genomics of Listeria species.</title>
        <authorList>
            <person name="Glaser P."/>
            <person name="Frangeul L."/>
            <person name="Buchrieser C."/>
            <person name="Rusniok C."/>
            <person name="Amend A."/>
            <person name="Baquero F."/>
            <person name="Berche P."/>
            <person name="Bloecker H."/>
            <person name="Brandt P."/>
            <person name="Chakraborty T."/>
            <person name="Charbit A."/>
            <person name="Chetouani F."/>
            <person name="Couve E."/>
            <person name="de Daruvar A."/>
            <person name="Dehoux P."/>
            <person name="Domann E."/>
            <person name="Dominguez-Bernal G."/>
            <person name="Duchaud E."/>
            <person name="Durant L."/>
            <person name="Dussurget O."/>
            <person name="Entian K.-D."/>
            <person name="Fsihi H."/>
            <person name="Garcia-del Portillo F."/>
            <person name="Garrido P."/>
            <person name="Gautier L."/>
            <person name="Goebel W."/>
            <person name="Gomez-Lopez N."/>
            <person name="Hain T."/>
            <person name="Hauf J."/>
            <person name="Jackson D."/>
            <person name="Jones L.-M."/>
            <person name="Kaerst U."/>
            <person name="Kreft J."/>
            <person name="Kuhn M."/>
            <person name="Kunst F."/>
            <person name="Kurapkat G."/>
            <person name="Madueno E."/>
            <person name="Maitournam A."/>
            <person name="Mata Vicente J."/>
            <person name="Ng E."/>
            <person name="Nedjari H."/>
            <person name="Nordsiek G."/>
            <person name="Novella S."/>
            <person name="de Pablos B."/>
            <person name="Perez-Diaz J.-C."/>
            <person name="Purcell R."/>
            <person name="Remmel B."/>
            <person name="Rose M."/>
            <person name="Schlueter T."/>
            <person name="Simoes N."/>
            <person name="Tierrez A."/>
            <person name="Vazquez-Boland J.-A."/>
            <person name="Voss H."/>
            <person name="Wehland J."/>
            <person name="Cossart P."/>
        </authorList>
    </citation>
    <scope>NUCLEOTIDE SEQUENCE [LARGE SCALE GENOMIC DNA]</scope>
    <source>
        <strain>ATCC BAA-680 / CLIP 11262</strain>
    </source>
</reference>
<proteinExistence type="inferred from homology"/>
<sequence length="145" mass="16579">MDESKKNERLKQLTDIQYNVTQKADTERPFQNEFYDNVAKGIYVDIVSGKPLFSSNDQYDAGCGWPSFTKPIDEAEVIEHRDLSHGMIRTEVKSVEADSHLGHVFPDGPQDQGGLRYCINSAALRFIPVDKLEEEGYQTYKKIFE</sequence>
<accession>Q92AE9</accession>